<name>OPN4_FELCA</name>
<feature type="chain" id="PRO_0000226728" description="Melanopsin">
    <location>
        <begin position="1"/>
        <end position="487"/>
    </location>
</feature>
<feature type="topological domain" description="Extracellular" evidence="3">
    <location>
        <begin position="1"/>
        <end position="67"/>
    </location>
</feature>
<feature type="transmembrane region" description="Helical; Name=1" evidence="3">
    <location>
        <begin position="68"/>
        <end position="88"/>
    </location>
</feature>
<feature type="topological domain" description="Cytoplasmic" evidence="3">
    <location>
        <begin position="89"/>
        <end position="102"/>
    </location>
</feature>
<feature type="transmembrane region" description="Helical; Name=2" evidence="3">
    <location>
        <begin position="103"/>
        <end position="123"/>
    </location>
</feature>
<feature type="topological domain" description="Extracellular" evidence="3">
    <location>
        <begin position="124"/>
        <end position="139"/>
    </location>
</feature>
<feature type="transmembrane region" description="Helical; Name=3" evidence="3">
    <location>
        <begin position="140"/>
        <end position="160"/>
    </location>
</feature>
<feature type="topological domain" description="Cytoplasmic" evidence="3">
    <location>
        <begin position="161"/>
        <end position="183"/>
    </location>
</feature>
<feature type="transmembrane region" description="Helical; Name=4" evidence="3">
    <location>
        <begin position="184"/>
        <end position="204"/>
    </location>
</feature>
<feature type="topological domain" description="Extracellular" evidence="3">
    <location>
        <begin position="205"/>
        <end position="233"/>
    </location>
</feature>
<feature type="transmembrane region" description="Helical; Name=5" evidence="3">
    <location>
        <begin position="234"/>
        <end position="254"/>
    </location>
</feature>
<feature type="topological domain" description="Cytoplasmic" evidence="3">
    <location>
        <begin position="255"/>
        <end position="291"/>
    </location>
</feature>
<feature type="transmembrane region" description="Helical; Name=6" evidence="3">
    <location>
        <begin position="292"/>
        <end position="312"/>
    </location>
</feature>
<feature type="topological domain" description="Extracellular" evidence="3">
    <location>
        <begin position="313"/>
        <end position="327"/>
    </location>
</feature>
<feature type="transmembrane region" description="Helical; Name=7" evidence="3">
    <location>
        <begin position="328"/>
        <end position="348"/>
    </location>
</feature>
<feature type="topological domain" description="Cytoplasmic" evidence="3">
    <location>
        <begin position="349"/>
        <end position="487"/>
    </location>
</feature>
<feature type="region of interest" description="Disordered" evidence="5">
    <location>
        <begin position="1"/>
        <end position="37"/>
    </location>
</feature>
<feature type="region of interest" description="Disordered" evidence="5">
    <location>
        <begin position="436"/>
        <end position="459"/>
    </location>
</feature>
<feature type="compositionally biased region" description="Basic and acidic residues" evidence="5">
    <location>
        <begin position="440"/>
        <end position="457"/>
    </location>
</feature>
<feature type="modified residue" description="N6-(retinylidene)lysine" evidence="1">
    <location>
        <position position="335"/>
    </location>
</feature>
<feature type="disulfide bond" evidence="4">
    <location>
        <begin position="138"/>
        <end position="216"/>
    </location>
</feature>
<gene>
    <name type="primary">OPN4</name>
</gene>
<reference key="1">
    <citation type="journal article" date="2005" name="Vis. Neurosci.">
        <title>Melanopsin (Opn4) positive cells in the cat retina are randomly distributed across the ganglion cell layer.</title>
        <authorList>
            <person name="Semo M."/>
            <person name="Munoz Llamosas M."/>
            <person name="Foster R.G."/>
            <person name="Jeffery G."/>
        </authorList>
    </citation>
    <scope>NUCLEOTIDE SEQUENCE [MRNA]</scope>
    <scope>TISSUE SPECIFICITY</scope>
</reference>
<accession>Q5YKK9</accession>
<comment type="function">
    <text evidence="2">Photoreceptor that binds cis-retinaldehydes (By similarity). Contributes to pupillar reflex, photoentrainment and other non-image forming responses to light (By similarity). May be involved in the optokinetic visual tracking response (By similarity). May be involved in the regulation of retinal hyaloid vessel growth and regression (By similarity).</text>
</comment>
<comment type="subcellular location">
    <subcellularLocation>
        <location evidence="2">Cell membrane</location>
        <topology evidence="3">Multi-pass membrane protein</topology>
    </subcellularLocation>
    <subcellularLocation>
        <location evidence="2">Cell projection</location>
        <location evidence="2">Axon</location>
    </subcellularLocation>
    <subcellularLocation>
        <location evidence="2">Cell projection</location>
        <location evidence="2">Dendrite</location>
    </subcellularLocation>
    <subcellularLocation>
        <location evidence="2">Perikaryon</location>
    </subcellularLocation>
</comment>
<comment type="tissue specificity">
    <text evidence="6">Eye. Expression is restricted within the ganglion cell layer.</text>
</comment>
<comment type="similarity">
    <text evidence="4">Belongs to the G-protein coupled receptor 1 family. Opsin subfamily.</text>
</comment>
<organism>
    <name type="scientific">Felis catus</name>
    <name type="common">Cat</name>
    <name type="synonym">Felis silvestris catus</name>
    <dbReference type="NCBI Taxonomy" id="9685"/>
    <lineage>
        <taxon>Eukaryota</taxon>
        <taxon>Metazoa</taxon>
        <taxon>Chordata</taxon>
        <taxon>Craniata</taxon>
        <taxon>Vertebrata</taxon>
        <taxon>Euteleostomi</taxon>
        <taxon>Mammalia</taxon>
        <taxon>Eutheria</taxon>
        <taxon>Laurasiatheria</taxon>
        <taxon>Carnivora</taxon>
        <taxon>Feliformia</taxon>
        <taxon>Felidae</taxon>
        <taxon>Felinae</taxon>
        <taxon>Felis</taxon>
    </lineage>
</organism>
<sequence length="487" mass="53681">MNPPSGPRTQEPSCVATPASPSRWDGYRSSTSSLDQPLPISPTAARAQAAAWIPFPTVDVPDHAHYTLGTVILLVGLTGILGNLMVIYTFCRSRGLRTPANMFIINLAVSDFFMSFTQAPVFFASSLHKRWLFGEAGCEFYAFCGALFGITSMITLMAIALDRYLVITHPLATIGVVSKRRAALVLLGVWLYALAWSLPPFFGWSAYVPEGLLTSCSWDYMSFTPSVRAYTMLLFCFVFFLPLLVIVYCYIFIFRAIRETGQALQTFRACEGGGRSPRQRQRLQREWKMAKIELLVILLFVLSWAPYSIVALMAFAGYAHVLTPYMNSVPAVIAKASAIHNPIIYAITHPKYRMAIAQHLPCLGVLLGVSGQHTGPYASYRSTHRSTLSSQASDLSWISGRRRQASLGSESEVGWMDTEAAAVWGAAQQVSGRFPCSQGLEDREAKAPVRPQGREAETPGQAMTMAMAPWDTPANCELPLHPGWAFH</sequence>
<protein>
    <recommendedName>
        <fullName>Melanopsin</fullName>
    </recommendedName>
    <alternativeName>
        <fullName>Opsin-4</fullName>
    </alternativeName>
</protein>
<dbReference type="EMBL" id="AY382594">
    <property type="protein sequence ID" value="AAR36861.1"/>
    <property type="molecule type" value="mRNA"/>
</dbReference>
<dbReference type="RefSeq" id="NP_001009325.1">
    <property type="nucleotide sequence ID" value="NM_001009325.2"/>
</dbReference>
<dbReference type="SMR" id="Q5YKK9"/>
<dbReference type="FunCoup" id="Q5YKK9">
    <property type="interactions" value="26"/>
</dbReference>
<dbReference type="STRING" id="9685.ENSFCAP00000051489"/>
<dbReference type="PaxDb" id="9685-ENSFCAP00000013930"/>
<dbReference type="Ensembl" id="ENSFCAT00000057256.2">
    <property type="protein sequence ID" value="ENSFCAP00000051489.2"/>
    <property type="gene ID" value="ENSFCAG00000015018.6"/>
</dbReference>
<dbReference type="GeneID" id="493921"/>
<dbReference type="KEGG" id="fca:493921"/>
<dbReference type="CTD" id="94233"/>
<dbReference type="VGNC" id="VGNC:103737">
    <property type="gene designation" value="OPN4"/>
</dbReference>
<dbReference type="eggNOG" id="KOG3656">
    <property type="taxonomic scope" value="Eukaryota"/>
</dbReference>
<dbReference type="GeneTree" id="ENSGT01120000271853"/>
<dbReference type="HOGENOM" id="CLU_009579_3_12_1"/>
<dbReference type="InParanoid" id="Q5YKK9"/>
<dbReference type="OrthoDB" id="9996086at2759"/>
<dbReference type="Proteomes" id="UP000011712">
    <property type="component" value="Chromosome D2"/>
</dbReference>
<dbReference type="GO" id="GO:0030424">
    <property type="term" value="C:axon"/>
    <property type="evidence" value="ECO:0007669"/>
    <property type="project" value="UniProtKB-SubCell"/>
</dbReference>
<dbReference type="GO" id="GO:0030425">
    <property type="term" value="C:dendrite"/>
    <property type="evidence" value="ECO:0007669"/>
    <property type="project" value="UniProtKB-SubCell"/>
</dbReference>
<dbReference type="GO" id="GO:0016020">
    <property type="term" value="C:membrane"/>
    <property type="evidence" value="ECO:0000304"/>
    <property type="project" value="UniProtKB"/>
</dbReference>
<dbReference type="GO" id="GO:0043204">
    <property type="term" value="C:perikaryon"/>
    <property type="evidence" value="ECO:0007669"/>
    <property type="project" value="UniProtKB-SubCell"/>
</dbReference>
<dbReference type="GO" id="GO:0005886">
    <property type="term" value="C:plasma membrane"/>
    <property type="evidence" value="ECO:0000250"/>
    <property type="project" value="UniProtKB"/>
</dbReference>
<dbReference type="GO" id="GO:0005502">
    <property type="term" value="F:11-cis retinal binding"/>
    <property type="evidence" value="ECO:0000250"/>
    <property type="project" value="UniProtKB"/>
</dbReference>
<dbReference type="GO" id="GO:0008020">
    <property type="term" value="F:G protein-coupled photoreceptor activity"/>
    <property type="evidence" value="ECO:0000250"/>
    <property type="project" value="UniProtKB"/>
</dbReference>
<dbReference type="GO" id="GO:0071482">
    <property type="term" value="P:cellular response to light stimulus"/>
    <property type="evidence" value="ECO:0000318"/>
    <property type="project" value="GO_Central"/>
</dbReference>
<dbReference type="GO" id="GO:0007186">
    <property type="term" value="P:G protein-coupled receptor signaling pathway"/>
    <property type="evidence" value="ECO:0000318"/>
    <property type="project" value="GO_Central"/>
</dbReference>
<dbReference type="GO" id="GO:1990384">
    <property type="term" value="P:hyaloid vascular plexus regression"/>
    <property type="evidence" value="ECO:0000250"/>
    <property type="project" value="UniProtKB"/>
</dbReference>
<dbReference type="GO" id="GO:0007634">
    <property type="term" value="P:optokinetic behavior"/>
    <property type="evidence" value="ECO:0000250"/>
    <property type="project" value="UniProtKB"/>
</dbReference>
<dbReference type="GO" id="GO:0007602">
    <property type="term" value="P:phototransduction"/>
    <property type="evidence" value="ECO:0000250"/>
    <property type="project" value="UniProtKB"/>
</dbReference>
<dbReference type="GO" id="GO:0042752">
    <property type="term" value="P:regulation of circadian rhythm"/>
    <property type="evidence" value="ECO:0000250"/>
    <property type="project" value="UniProtKB"/>
</dbReference>
<dbReference type="GO" id="GO:0048511">
    <property type="term" value="P:rhythmic process"/>
    <property type="evidence" value="ECO:0007669"/>
    <property type="project" value="UniProtKB-KW"/>
</dbReference>
<dbReference type="GO" id="GO:0007601">
    <property type="term" value="P:visual perception"/>
    <property type="evidence" value="ECO:0007669"/>
    <property type="project" value="InterPro"/>
</dbReference>
<dbReference type="CDD" id="cd15336">
    <property type="entry name" value="7tmA_Melanopsin"/>
    <property type="match status" value="1"/>
</dbReference>
<dbReference type="FunFam" id="1.20.1070.10:FF:000083">
    <property type="entry name" value="Melanopsin 1"/>
    <property type="match status" value="1"/>
</dbReference>
<dbReference type="Gene3D" id="1.20.1070.10">
    <property type="entry name" value="Rhodopsin 7-helix transmembrane proteins"/>
    <property type="match status" value="1"/>
</dbReference>
<dbReference type="InterPro" id="IPR050125">
    <property type="entry name" value="GPCR_opsins"/>
</dbReference>
<dbReference type="InterPro" id="IPR000276">
    <property type="entry name" value="GPCR_Rhodpsn"/>
</dbReference>
<dbReference type="InterPro" id="IPR017452">
    <property type="entry name" value="GPCR_Rhodpsn_7TM"/>
</dbReference>
<dbReference type="InterPro" id="IPR001760">
    <property type="entry name" value="Opsin"/>
</dbReference>
<dbReference type="InterPro" id="IPR027430">
    <property type="entry name" value="Retinal_BS"/>
</dbReference>
<dbReference type="PANTHER" id="PTHR24240">
    <property type="entry name" value="OPSIN"/>
    <property type="match status" value="1"/>
</dbReference>
<dbReference type="Pfam" id="PF00001">
    <property type="entry name" value="7tm_1"/>
    <property type="match status" value="1"/>
</dbReference>
<dbReference type="PRINTS" id="PR00237">
    <property type="entry name" value="GPCRRHODOPSN"/>
</dbReference>
<dbReference type="PRINTS" id="PR00238">
    <property type="entry name" value="OPSIN"/>
</dbReference>
<dbReference type="SMART" id="SM01381">
    <property type="entry name" value="7TM_GPCR_Srsx"/>
    <property type="match status" value="1"/>
</dbReference>
<dbReference type="SUPFAM" id="SSF81321">
    <property type="entry name" value="Family A G protein-coupled receptor-like"/>
    <property type="match status" value="1"/>
</dbReference>
<dbReference type="PROSITE" id="PS00237">
    <property type="entry name" value="G_PROTEIN_RECEP_F1_1"/>
    <property type="match status" value="1"/>
</dbReference>
<dbReference type="PROSITE" id="PS50262">
    <property type="entry name" value="G_PROTEIN_RECEP_F1_2"/>
    <property type="match status" value="1"/>
</dbReference>
<dbReference type="PROSITE" id="PS00238">
    <property type="entry name" value="OPSIN"/>
    <property type="match status" value="1"/>
</dbReference>
<keyword id="KW-0090">Biological rhythms</keyword>
<keyword id="KW-1003">Cell membrane</keyword>
<keyword id="KW-0966">Cell projection</keyword>
<keyword id="KW-0157">Chromophore</keyword>
<keyword id="KW-1015">Disulfide bond</keyword>
<keyword id="KW-0297">G-protein coupled receptor</keyword>
<keyword id="KW-0472">Membrane</keyword>
<keyword id="KW-0600">Photoreceptor protein</keyword>
<keyword id="KW-0675">Receptor</keyword>
<keyword id="KW-1185">Reference proteome</keyword>
<keyword id="KW-0681">Retinal protein</keyword>
<keyword id="KW-0716">Sensory transduction</keyword>
<keyword id="KW-0807">Transducer</keyword>
<keyword id="KW-0812">Transmembrane</keyword>
<keyword id="KW-1133">Transmembrane helix</keyword>
<evidence type="ECO:0000250" key="1"/>
<evidence type="ECO:0000250" key="2">
    <source>
        <dbReference type="UniProtKB" id="Q9QXZ9"/>
    </source>
</evidence>
<evidence type="ECO:0000255" key="3"/>
<evidence type="ECO:0000255" key="4">
    <source>
        <dbReference type="PROSITE-ProRule" id="PRU00521"/>
    </source>
</evidence>
<evidence type="ECO:0000256" key="5">
    <source>
        <dbReference type="SAM" id="MobiDB-lite"/>
    </source>
</evidence>
<evidence type="ECO:0000269" key="6">
    <source>
    </source>
</evidence>
<proteinExistence type="evidence at transcript level"/>